<evidence type="ECO:0000255" key="1">
    <source>
        <dbReference type="HAMAP-Rule" id="MF_01537"/>
    </source>
</evidence>
<feature type="chain" id="PRO_0000298684" description="Pyrimidine/purine nucleoside phosphorylase">
    <location>
        <begin position="1"/>
        <end position="105"/>
    </location>
</feature>
<comment type="function">
    <text evidence="1">Catalyzes the phosphorolysis of diverse nucleosides, yielding D-ribose 1-phosphate and the respective free bases. Can use uridine, adenosine, guanosine, cytidine, thymidine, inosine and xanthosine as substrates. Also catalyzes the reverse reactions.</text>
</comment>
<comment type="catalytic activity">
    <reaction evidence="1">
        <text>a purine D-ribonucleoside + phosphate = a purine nucleobase + alpha-D-ribose 1-phosphate</text>
        <dbReference type="Rhea" id="RHEA:19805"/>
        <dbReference type="ChEBI" id="CHEBI:26386"/>
        <dbReference type="ChEBI" id="CHEBI:43474"/>
        <dbReference type="ChEBI" id="CHEBI:57720"/>
        <dbReference type="ChEBI" id="CHEBI:142355"/>
        <dbReference type="EC" id="2.4.2.1"/>
    </reaction>
</comment>
<comment type="catalytic activity">
    <reaction evidence="1">
        <text>adenosine + phosphate = alpha-D-ribose 1-phosphate + adenine</text>
        <dbReference type="Rhea" id="RHEA:27642"/>
        <dbReference type="ChEBI" id="CHEBI:16335"/>
        <dbReference type="ChEBI" id="CHEBI:16708"/>
        <dbReference type="ChEBI" id="CHEBI:43474"/>
        <dbReference type="ChEBI" id="CHEBI:57720"/>
        <dbReference type="EC" id="2.4.2.1"/>
    </reaction>
</comment>
<comment type="catalytic activity">
    <reaction evidence="1">
        <text>cytidine + phosphate = cytosine + alpha-D-ribose 1-phosphate</text>
        <dbReference type="Rhea" id="RHEA:52540"/>
        <dbReference type="ChEBI" id="CHEBI:16040"/>
        <dbReference type="ChEBI" id="CHEBI:17562"/>
        <dbReference type="ChEBI" id="CHEBI:43474"/>
        <dbReference type="ChEBI" id="CHEBI:57720"/>
        <dbReference type="EC" id="2.4.2.2"/>
    </reaction>
</comment>
<comment type="catalytic activity">
    <reaction evidence="1">
        <text>guanosine + phosphate = alpha-D-ribose 1-phosphate + guanine</text>
        <dbReference type="Rhea" id="RHEA:13233"/>
        <dbReference type="ChEBI" id="CHEBI:16235"/>
        <dbReference type="ChEBI" id="CHEBI:16750"/>
        <dbReference type="ChEBI" id="CHEBI:43474"/>
        <dbReference type="ChEBI" id="CHEBI:57720"/>
        <dbReference type="EC" id="2.4.2.1"/>
    </reaction>
</comment>
<comment type="catalytic activity">
    <reaction evidence="1">
        <text>inosine + phosphate = alpha-D-ribose 1-phosphate + hypoxanthine</text>
        <dbReference type="Rhea" id="RHEA:27646"/>
        <dbReference type="ChEBI" id="CHEBI:17368"/>
        <dbReference type="ChEBI" id="CHEBI:17596"/>
        <dbReference type="ChEBI" id="CHEBI:43474"/>
        <dbReference type="ChEBI" id="CHEBI:57720"/>
        <dbReference type="EC" id="2.4.2.1"/>
    </reaction>
</comment>
<comment type="catalytic activity">
    <reaction evidence="1">
        <text>thymidine + phosphate = 2-deoxy-alpha-D-ribose 1-phosphate + thymine</text>
        <dbReference type="Rhea" id="RHEA:16037"/>
        <dbReference type="ChEBI" id="CHEBI:17748"/>
        <dbReference type="ChEBI" id="CHEBI:17821"/>
        <dbReference type="ChEBI" id="CHEBI:43474"/>
        <dbReference type="ChEBI" id="CHEBI:57259"/>
        <dbReference type="EC" id="2.4.2.2"/>
    </reaction>
</comment>
<comment type="catalytic activity">
    <reaction evidence="1">
        <text>uridine + phosphate = alpha-D-ribose 1-phosphate + uracil</text>
        <dbReference type="Rhea" id="RHEA:24388"/>
        <dbReference type="ChEBI" id="CHEBI:16704"/>
        <dbReference type="ChEBI" id="CHEBI:17568"/>
        <dbReference type="ChEBI" id="CHEBI:43474"/>
        <dbReference type="ChEBI" id="CHEBI:57720"/>
        <dbReference type="EC" id="2.4.2.2"/>
    </reaction>
</comment>
<comment type="catalytic activity">
    <reaction evidence="1">
        <text>xanthosine + phosphate = alpha-D-ribose 1-phosphate + xanthine</text>
        <dbReference type="Rhea" id="RHEA:27638"/>
        <dbReference type="ChEBI" id="CHEBI:17712"/>
        <dbReference type="ChEBI" id="CHEBI:18107"/>
        <dbReference type="ChEBI" id="CHEBI:43474"/>
        <dbReference type="ChEBI" id="CHEBI:57720"/>
        <dbReference type="EC" id="2.4.2.1"/>
    </reaction>
</comment>
<comment type="similarity">
    <text evidence="1">Belongs to the nucleoside phosphorylase PpnP family.</text>
</comment>
<organism>
    <name type="scientific">Paracidovorax citrulli (strain AAC00-1)</name>
    <name type="common">Acidovorax citrulli</name>
    <dbReference type="NCBI Taxonomy" id="397945"/>
    <lineage>
        <taxon>Bacteria</taxon>
        <taxon>Pseudomonadati</taxon>
        <taxon>Pseudomonadota</taxon>
        <taxon>Betaproteobacteria</taxon>
        <taxon>Burkholderiales</taxon>
        <taxon>Comamonadaceae</taxon>
        <taxon>Paracidovorax</taxon>
    </lineage>
</organism>
<sequence length="105" mass="11272">MTTEKIDGVSVTARANVYFDGKCVSHGITFPDGTKKSVGVILPATLTFNTGAPEIMECVGGACEYKLDGTDAWVKSGEGDKFSVPGNSKFEIRVTEAYHYICHFG</sequence>
<protein>
    <recommendedName>
        <fullName evidence="1">Pyrimidine/purine nucleoside phosphorylase</fullName>
        <ecNumber evidence="1">2.4.2.1</ecNumber>
        <ecNumber evidence="1">2.4.2.2</ecNumber>
    </recommendedName>
    <alternativeName>
        <fullName evidence="1">Adenosine phosphorylase</fullName>
    </alternativeName>
    <alternativeName>
        <fullName evidence="1">Cytidine phosphorylase</fullName>
    </alternativeName>
    <alternativeName>
        <fullName evidence="1">Guanosine phosphorylase</fullName>
    </alternativeName>
    <alternativeName>
        <fullName evidence="1">Inosine phosphorylase</fullName>
    </alternativeName>
    <alternativeName>
        <fullName evidence="1">Thymidine phosphorylase</fullName>
    </alternativeName>
    <alternativeName>
        <fullName evidence="1">Uridine phosphorylase</fullName>
    </alternativeName>
    <alternativeName>
        <fullName evidence="1">Xanthosine phosphorylase</fullName>
    </alternativeName>
</protein>
<reference key="1">
    <citation type="submission" date="2006-12" db="EMBL/GenBank/DDBJ databases">
        <title>Complete sequence of Acidovorax avenae subsp. citrulli AAC00-1.</title>
        <authorList>
            <person name="Copeland A."/>
            <person name="Lucas S."/>
            <person name="Lapidus A."/>
            <person name="Barry K."/>
            <person name="Detter J.C."/>
            <person name="Glavina del Rio T."/>
            <person name="Dalin E."/>
            <person name="Tice H."/>
            <person name="Pitluck S."/>
            <person name="Kiss H."/>
            <person name="Brettin T."/>
            <person name="Bruce D."/>
            <person name="Han C."/>
            <person name="Tapia R."/>
            <person name="Gilna P."/>
            <person name="Schmutz J."/>
            <person name="Larimer F."/>
            <person name="Land M."/>
            <person name="Hauser L."/>
            <person name="Kyrpides N."/>
            <person name="Kim E."/>
            <person name="Stahl D."/>
            <person name="Richardson P."/>
        </authorList>
    </citation>
    <scope>NUCLEOTIDE SEQUENCE [LARGE SCALE GENOMIC DNA]</scope>
    <source>
        <strain>AAC00-1</strain>
    </source>
</reference>
<name>PPNP_PARC0</name>
<gene>
    <name evidence="1" type="primary">ppnP</name>
    <name type="ordered locus">Aave_1857</name>
</gene>
<proteinExistence type="inferred from homology"/>
<dbReference type="EC" id="2.4.2.1" evidence="1"/>
<dbReference type="EC" id="2.4.2.2" evidence="1"/>
<dbReference type="EMBL" id="CP000512">
    <property type="protein sequence ID" value="ABM32441.1"/>
    <property type="molecule type" value="Genomic_DNA"/>
</dbReference>
<dbReference type="RefSeq" id="WP_011794987.1">
    <property type="nucleotide sequence ID" value="NC_008752.1"/>
</dbReference>
<dbReference type="SMR" id="A1TNA3"/>
<dbReference type="STRING" id="397945.Aave_1857"/>
<dbReference type="GeneID" id="79793133"/>
<dbReference type="KEGG" id="aav:Aave_1857"/>
<dbReference type="eggNOG" id="COG3123">
    <property type="taxonomic scope" value="Bacteria"/>
</dbReference>
<dbReference type="HOGENOM" id="CLU_157874_1_0_4"/>
<dbReference type="OrthoDB" id="9793848at2"/>
<dbReference type="Proteomes" id="UP000002596">
    <property type="component" value="Chromosome"/>
</dbReference>
<dbReference type="GO" id="GO:0005829">
    <property type="term" value="C:cytosol"/>
    <property type="evidence" value="ECO:0007669"/>
    <property type="project" value="TreeGrafter"/>
</dbReference>
<dbReference type="GO" id="GO:0047975">
    <property type="term" value="F:guanosine phosphorylase activity"/>
    <property type="evidence" value="ECO:0007669"/>
    <property type="project" value="UniProtKB-EC"/>
</dbReference>
<dbReference type="GO" id="GO:0004731">
    <property type="term" value="F:purine-nucleoside phosphorylase activity"/>
    <property type="evidence" value="ECO:0007669"/>
    <property type="project" value="UniProtKB-UniRule"/>
</dbReference>
<dbReference type="GO" id="GO:0009032">
    <property type="term" value="F:thymidine phosphorylase activity"/>
    <property type="evidence" value="ECO:0007669"/>
    <property type="project" value="UniProtKB-EC"/>
</dbReference>
<dbReference type="GO" id="GO:0004850">
    <property type="term" value="F:uridine phosphorylase activity"/>
    <property type="evidence" value="ECO:0007669"/>
    <property type="project" value="UniProtKB-EC"/>
</dbReference>
<dbReference type="CDD" id="cd20296">
    <property type="entry name" value="cupin_PpnP-like"/>
    <property type="match status" value="1"/>
</dbReference>
<dbReference type="Gene3D" id="2.60.120.10">
    <property type="entry name" value="Jelly Rolls"/>
    <property type="match status" value="1"/>
</dbReference>
<dbReference type="HAMAP" id="MF_01537">
    <property type="entry name" value="Nucleos_phosphorylase_PpnP"/>
    <property type="match status" value="1"/>
</dbReference>
<dbReference type="InterPro" id="IPR009664">
    <property type="entry name" value="Ppnp"/>
</dbReference>
<dbReference type="InterPro" id="IPR014710">
    <property type="entry name" value="RmlC-like_jellyroll"/>
</dbReference>
<dbReference type="InterPro" id="IPR011051">
    <property type="entry name" value="RmlC_Cupin_sf"/>
</dbReference>
<dbReference type="PANTHER" id="PTHR36540">
    <property type="entry name" value="PYRIMIDINE/PURINE NUCLEOSIDE PHOSPHORYLASE"/>
    <property type="match status" value="1"/>
</dbReference>
<dbReference type="PANTHER" id="PTHR36540:SF1">
    <property type="entry name" value="PYRIMIDINE_PURINE NUCLEOSIDE PHOSPHORYLASE"/>
    <property type="match status" value="1"/>
</dbReference>
<dbReference type="Pfam" id="PF06865">
    <property type="entry name" value="Ppnp"/>
    <property type="match status" value="1"/>
</dbReference>
<dbReference type="SUPFAM" id="SSF51182">
    <property type="entry name" value="RmlC-like cupins"/>
    <property type="match status" value="1"/>
</dbReference>
<accession>A1TNA3</accession>
<keyword id="KW-0328">Glycosyltransferase</keyword>
<keyword id="KW-0808">Transferase</keyword>